<dbReference type="EMBL" id="AM747720">
    <property type="protein sequence ID" value="CAR52391.1"/>
    <property type="molecule type" value="Genomic_DNA"/>
</dbReference>
<dbReference type="RefSeq" id="WP_006483818.1">
    <property type="nucleotide sequence ID" value="NC_011000.1"/>
</dbReference>
<dbReference type="SMR" id="B4ECN1"/>
<dbReference type="GeneID" id="93030970"/>
<dbReference type="KEGG" id="bcj:BCAL2091"/>
<dbReference type="eggNOG" id="COG0052">
    <property type="taxonomic scope" value="Bacteria"/>
</dbReference>
<dbReference type="HOGENOM" id="CLU_040318_1_2_4"/>
<dbReference type="BioCyc" id="BCEN216591:G1G1V-2291-MONOMER"/>
<dbReference type="Proteomes" id="UP000001035">
    <property type="component" value="Chromosome 1"/>
</dbReference>
<dbReference type="GO" id="GO:0022627">
    <property type="term" value="C:cytosolic small ribosomal subunit"/>
    <property type="evidence" value="ECO:0007669"/>
    <property type="project" value="TreeGrafter"/>
</dbReference>
<dbReference type="GO" id="GO:0003735">
    <property type="term" value="F:structural constituent of ribosome"/>
    <property type="evidence" value="ECO:0007669"/>
    <property type="project" value="InterPro"/>
</dbReference>
<dbReference type="GO" id="GO:0006412">
    <property type="term" value="P:translation"/>
    <property type="evidence" value="ECO:0007669"/>
    <property type="project" value="UniProtKB-UniRule"/>
</dbReference>
<dbReference type="CDD" id="cd01425">
    <property type="entry name" value="RPS2"/>
    <property type="match status" value="1"/>
</dbReference>
<dbReference type="FunFam" id="1.10.287.610:FF:000001">
    <property type="entry name" value="30S ribosomal protein S2"/>
    <property type="match status" value="1"/>
</dbReference>
<dbReference type="Gene3D" id="3.40.50.10490">
    <property type="entry name" value="Glucose-6-phosphate isomerase like protein, domain 1"/>
    <property type="match status" value="1"/>
</dbReference>
<dbReference type="Gene3D" id="1.10.287.610">
    <property type="entry name" value="Helix hairpin bin"/>
    <property type="match status" value="1"/>
</dbReference>
<dbReference type="HAMAP" id="MF_00291_B">
    <property type="entry name" value="Ribosomal_uS2_B"/>
    <property type="match status" value="1"/>
</dbReference>
<dbReference type="InterPro" id="IPR001865">
    <property type="entry name" value="Ribosomal_uS2"/>
</dbReference>
<dbReference type="InterPro" id="IPR005706">
    <property type="entry name" value="Ribosomal_uS2_bac/mit/plastid"/>
</dbReference>
<dbReference type="InterPro" id="IPR018130">
    <property type="entry name" value="Ribosomal_uS2_CS"/>
</dbReference>
<dbReference type="InterPro" id="IPR023591">
    <property type="entry name" value="Ribosomal_uS2_flav_dom_sf"/>
</dbReference>
<dbReference type="NCBIfam" id="TIGR01011">
    <property type="entry name" value="rpsB_bact"/>
    <property type="match status" value="1"/>
</dbReference>
<dbReference type="PANTHER" id="PTHR12534">
    <property type="entry name" value="30S RIBOSOMAL PROTEIN S2 PROKARYOTIC AND ORGANELLAR"/>
    <property type="match status" value="1"/>
</dbReference>
<dbReference type="PANTHER" id="PTHR12534:SF0">
    <property type="entry name" value="SMALL RIBOSOMAL SUBUNIT PROTEIN US2M"/>
    <property type="match status" value="1"/>
</dbReference>
<dbReference type="Pfam" id="PF00318">
    <property type="entry name" value="Ribosomal_S2"/>
    <property type="match status" value="1"/>
</dbReference>
<dbReference type="PRINTS" id="PR00395">
    <property type="entry name" value="RIBOSOMALS2"/>
</dbReference>
<dbReference type="SUPFAM" id="SSF52313">
    <property type="entry name" value="Ribosomal protein S2"/>
    <property type="match status" value="1"/>
</dbReference>
<dbReference type="PROSITE" id="PS00962">
    <property type="entry name" value="RIBOSOMAL_S2_1"/>
    <property type="match status" value="1"/>
</dbReference>
<name>RS2_BURCJ</name>
<organism>
    <name type="scientific">Burkholderia cenocepacia (strain ATCC BAA-245 / DSM 16553 / LMG 16656 / NCTC 13227 / J2315 / CF5610)</name>
    <name type="common">Burkholderia cepacia (strain J2315)</name>
    <dbReference type="NCBI Taxonomy" id="216591"/>
    <lineage>
        <taxon>Bacteria</taxon>
        <taxon>Pseudomonadati</taxon>
        <taxon>Pseudomonadota</taxon>
        <taxon>Betaproteobacteria</taxon>
        <taxon>Burkholderiales</taxon>
        <taxon>Burkholderiaceae</taxon>
        <taxon>Burkholderia</taxon>
        <taxon>Burkholderia cepacia complex</taxon>
    </lineage>
</organism>
<protein>
    <recommendedName>
        <fullName evidence="1">Small ribosomal subunit protein uS2</fullName>
    </recommendedName>
    <alternativeName>
        <fullName evidence="2">30S ribosomal protein S2</fullName>
    </alternativeName>
</protein>
<reference key="1">
    <citation type="journal article" date="2009" name="J. Bacteriol.">
        <title>The genome of Burkholderia cenocepacia J2315, an epidemic pathogen of cystic fibrosis patients.</title>
        <authorList>
            <person name="Holden M.T."/>
            <person name="Seth-Smith H.M."/>
            <person name="Crossman L.C."/>
            <person name="Sebaihia M."/>
            <person name="Bentley S.D."/>
            <person name="Cerdeno-Tarraga A.M."/>
            <person name="Thomson N.R."/>
            <person name="Bason N."/>
            <person name="Quail M.A."/>
            <person name="Sharp S."/>
            <person name="Cherevach I."/>
            <person name="Churcher C."/>
            <person name="Goodhead I."/>
            <person name="Hauser H."/>
            <person name="Holroyd N."/>
            <person name="Mungall K."/>
            <person name="Scott P."/>
            <person name="Walker D."/>
            <person name="White B."/>
            <person name="Rose H."/>
            <person name="Iversen P."/>
            <person name="Mil-Homens D."/>
            <person name="Rocha E.P."/>
            <person name="Fialho A.M."/>
            <person name="Baldwin A."/>
            <person name="Dowson C."/>
            <person name="Barrell B.G."/>
            <person name="Govan J.R."/>
            <person name="Vandamme P."/>
            <person name="Hart C.A."/>
            <person name="Mahenthiralingam E."/>
            <person name="Parkhill J."/>
        </authorList>
    </citation>
    <scope>NUCLEOTIDE SEQUENCE [LARGE SCALE GENOMIC DNA]</scope>
    <source>
        <strain>ATCC BAA-245 / DSM 16553 / LMG 16656 / NCTC 13227 / J2315 / CF5610</strain>
    </source>
</reference>
<comment type="similarity">
    <text evidence="1">Belongs to the universal ribosomal protein uS2 family.</text>
</comment>
<proteinExistence type="inferred from homology"/>
<gene>
    <name evidence="1" type="primary">rpsB</name>
    <name type="ordered locus">BceJ2315_20530</name>
    <name type="ORF">BCAL2091</name>
</gene>
<sequence>MAVTMRQMLEAGVHFGHQTRFWNPKMAPFIFGHRNKIHIINLEKTLPMFTDAQKYVRQLAANRGTILFVGTKRQSRDTIAQEAQRAGMPYVNARWLGGMMTNFKTLKVSIKRLKDMEAAVEAGELEKMSKKEALLFEREIAKLQKSIGGVKDMGGIPDAIFVVDVGYHKIAVTEANKLGVPVIAVVDTNHSPEGVDYVIPGNDDSSKAVALYAEGVADAILEGRANAVNEVVQAARGDDEYVEENA</sequence>
<keyword id="KW-0687">Ribonucleoprotein</keyword>
<keyword id="KW-0689">Ribosomal protein</keyword>
<accession>B4ECN1</accession>
<evidence type="ECO:0000255" key="1">
    <source>
        <dbReference type="HAMAP-Rule" id="MF_00291"/>
    </source>
</evidence>
<evidence type="ECO:0000305" key="2"/>
<feature type="chain" id="PRO_1000114999" description="Small ribosomal subunit protein uS2">
    <location>
        <begin position="1"/>
        <end position="246"/>
    </location>
</feature>